<evidence type="ECO:0000255" key="1">
    <source>
        <dbReference type="HAMAP-Rule" id="MF_00502"/>
    </source>
</evidence>
<evidence type="ECO:0000305" key="2"/>
<feature type="chain" id="PRO_1000014688" description="Large ribosomal subunit protein bL31B">
    <location>
        <begin position="1"/>
        <end position="87"/>
    </location>
</feature>
<keyword id="KW-0687">Ribonucleoprotein</keyword>
<keyword id="KW-0689">Ribosomal protein</keyword>
<name>RL31B_BURM7</name>
<accession>A3MK98</accession>
<dbReference type="EMBL" id="CP000548">
    <property type="protein sequence ID" value="ABO05855.1"/>
    <property type="molecule type" value="Genomic_DNA"/>
</dbReference>
<dbReference type="RefSeq" id="WP_004193070.1">
    <property type="nucleotide sequence ID" value="NZ_CP007802.1"/>
</dbReference>
<dbReference type="SMR" id="A3MK98"/>
<dbReference type="KEGG" id="bmaz:BM44_1969"/>
<dbReference type="KEGG" id="bmn:BMA10247_1131"/>
<dbReference type="PATRIC" id="fig|320389.8.peg.2210"/>
<dbReference type="GO" id="GO:1990904">
    <property type="term" value="C:ribonucleoprotein complex"/>
    <property type="evidence" value="ECO:0007669"/>
    <property type="project" value="UniProtKB-KW"/>
</dbReference>
<dbReference type="GO" id="GO:0005840">
    <property type="term" value="C:ribosome"/>
    <property type="evidence" value="ECO:0007669"/>
    <property type="project" value="UniProtKB-KW"/>
</dbReference>
<dbReference type="GO" id="GO:0003735">
    <property type="term" value="F:structural constituent of ribosome"/>
    <property type="evidence" value="ECO:0007669"/>
    <property type="project" value="InterPro"/>
</dbReference>
<dbReference type="GO" id="GO:0006412">
    <property type="term" value="P:translation"/>
    <property type="evidence" value="ECO:0007669"/>
    <property type="project" value="UniProtKB-UniRule"/>
</dbReference>
<dbReference type="Gene3D" id="4.10.830.30">
    <property type="entry name" value="Ribosomal protein L31"/>
    <property type="match status" value="1"/>
</dbReference>
<dbReference type="HAMAP" id="MF_00502">
    <property type="entry name" value="Ribosomal_bL31_2"/>
    <property type="match status" value="1"/>
</dbReference>
<dbReference type="InterPro" id="IPR034704">
    <property type="entry name" value="Ribosomal_bL28/bL31-like_sf"/>
</dbReference>
<dbReference type="InterPro" id="IPR002150">
    <property type="entry name" value="Ribosomal_bL31"/>
</dbReference>
<dbReference type="InterPro" id="IPR027493">
    <property type="entry name" value="Ribosomal_bL31_B"/>
</dbReference>
<dbReference type="InterPro" id="IPR042105">
    <property type="entry name" value="Ribosomal_bL31_sf"/>
</dbReference>
<dbReference type="NCBIfam" id="TIGR00105">
    <property type="entry name" value="L31"/>
    <property type="match status" value="1"/>
</dbReference>
<dbReference type="NCBIfam" id="NF002462">
    <property type="entry name" value="PRK01678.1"/>
    <property type="match status" value="1"/>
</dbReference>
<dbReference type="PANTHER" id="PTHR33280">
    <property type="entry name" value="50S RIBOSOMAL PROTEIN L31, CHLOROPLASTIC"/>
    <property type="match status" value="1"/>
</dbReference>
<dbReference type="PANTHER" id="PTHR33280:SF1">
    <property type="entry name" value="LARGE RIBOSOMAL SUBUNIT PROTEIN BL31C"/>
    <property type="match status" value="1"/>
</dbReference>
<dbReference type="Pfam" id="PF01197">
    <property type="entry name" value="Ribosomal_L31"/>
    <property type="match status" value="1"/>
</dbReference>
<dbReference type="PRINTS" id="PR01249">
    <property type="entry name" value="RIBOSOMALL31"/>
</dbReference>
<dbReference type="SUPFAM" id="SSF143800">
    <property type="entry name" value="L28p-like"/>
    <property type="match status" value="1"/>
</dbReference>
<reference key="1">
    <citation type="journal article" date="2010" name="Genome Biol. Evol.">
        <title>Continuing evolution of Burkholderia mallei through genome reduction and large-scale rearrangements.</title>
        <authorList>
            <person name="Losada L."/>
            <person name="Ronning C.M."/>
            <person name="DeShazer D."/>
            <person name="Woods D."/>
            <person name="Fedorova N."/>
            <person name="Kim H.S."/>
            <person name="Shabalina S.A."/>
            <person name="Pearson T.R."/>
            <person name="Brinkac L."/>
            <person name="Tan P."/>
            <person name="Nandi T."/>
            <person name="Crabtree J."/>
            <person name="Badger J."/>
            <person name="Beckstrom-Sternberg S."/>
            <person name="Saqib M."/>
            <person name="Schutzer S.E."/>
            <person name="Keim P."/>
            <person name="Nierman W.C."/>
        </authorList>
    </citation>
    <scope>NUCLEOTIDE SEQUENCE [LARGE SCALE GENOMIC DNA]</scope>
    <source>
        <strain>NCTC 10247</strain>
    </source>
</reference>
<organism>
    <name type="scientific">Burkholderia mallei (strain NCTC 10247)</name>
    <dbReference type="NCBI Taxonomy" id="320389"/>
    <lineage>
        <taxon>Bacteria</taxon>
        <taxon>Pseudomonadati</taxon>
        <taxon>Pseudomonadota</taxon>
        <taxon>Betaproteobacteria</taxon>
        <taxon>Burkholderiales</taxon>
        <taxon>Burkholderiaceae</taxon>
        <taxon>Burkholderia</taxon>
        <taxon>pseudomallei group</taxon>
    </lineage>
</organism>
<comment type="subunit">
    <text evidence="1">Part of the 50S ribosomal subunit.</text>
</comment>
<comment type="similarity">
    <text evidence="1">Belongs to the bacterial ribosomal protein bL31 family. Type B subfamily.</text>
</comment>
<protein>
    <recommendedName>
        <fullName evidence="1">Large ribosomal subunit protein bL31B</fullName>
    </recommendedName>
    <alternativeName>
        <fullName evidence="2">50S ribosomal protein L31 type B</fullName>
    </alternativeName>
</protein>
<gene>
    <name evidence="1" type="primary">rpmE2</name>
    <name type="ordered locus">BMA10247_1131</name>
</gene>
<sequence length="87" mass="9912">MKQGIHPDYREVVFQDMSNGFKFITRSTIQTRETIEFEGKTYPLAKIEVSSESHSFYTGQQKIMDTAGRVEKFKNKFGARASGKAAK</sequence>
<proteinExistence type="inferred from homology"/>